<gene>
    <name evidence="1" type="primary">kdsA</name>
    <name type="ordered locus">CBUD_0326</name>
</gene>
<sequence>MLMQIADFEIGLNNPLFLIAGPCVIESEALVMDVAGELKSITQQLDMPFIFKASFDKANRSSHLSYRGPGIEKGLTILEKVKKTLEVPIITDVHEDTPLQEVAAVVDVLQTPAFLCRQSNFIRSVAACGKPVNIKKGQFLAPWEMKQVVAKAWATGNKKIMVCERGYSFGYNNLISDMRALAILRETACPVIFDATHSVQLPGGHGTSSGGQRKFVPVLARAATAAGIAGIFMETHPDPDRALSDGPNSWPLAKMQPLLETLKELDKVVKNAGFLEQSSE</sequence>
<keyword id="KW-0963">Cytoplasm</keyword>
<keyword id="KW-0448">Lipopolysaccharide biosynthesis</keyword>
<keyword id="KW-0808">Transferase</keyword>
<name>KDSA_COXBN</name>
<feature type="chain" id="PRO_1000091808" description="2-dehydro-3-deoxyphosphooctonate aldolase">
    <location>
        <begin position="1"/>
        <end position="280"/>
    </location>
</feature>
<organism>
    <name type="scientific">Coxiella burnetii (strain Dugway 5J108-111)</name>
    <dbReference type="NCBI Taxonomy" id="434922"/>
    <lineage>
        <taxon>Bacteria</taxon>
        <taxon>Pseudomonadati</taxon>
        <taxon>Pseudomonadota</taxon>
        <taxon>Gammaproteobacteria</taxon>
        <taxon>Legionellales</taxon>
        <taxon>Coxiellaceae</taxon>
        <taxon>Coxiella</taxon>
    </lineage>
</organism>
<reference key="1">
    <citation type="journal article" date="2009" name="Infect. Immun.">
        <title>Comparative genomics reveal extensive transposon-mediated genomic plasticity and diversity among potential effector proteins within the genus Coxiella.</title>
        <authorList>
            <person name="Beare P.A."/>
            <person name="Unsworth N."/>
            <person name="Andoh M."/>
            <person name="Voth D.E."/>
            <person name="Omsland A."/>
            <person name="Gilk S.D."/>
            <person name="Williams K.P."/>
            <person name="Sobral B.W."/>
            <person name="Kupko J.J. III"/>
            <person name="Porcella S.F."/>
            <person name="Samuel J.E."/>
            <person name="Heinzen R.A."/>
        </authorList>
    </citation>
    <scope>NUCLEOTIDE SEQUENCE [LARGE SCALE GENOMIC DNA]</scope>
    <source>
        <strain>Dugway 5J108-111</strain>
    </source>
</reference>
<protein>
    <recommendedName>
        <fullName evidence="1">2-dehydro-3-deoxyphosphooctonate aldolase</fullName>
        <ecNumber evidence="1">2.5.1.55</ecNumber>
    </recommendedName>
    <alternativeName>
        <fullName evidence="1">3-deoxy-D-manno-octulosonic acid 8-phosphate synthase</fullName>
    </alternativeName>
    <alternativeName>
        <fullName evidence="1">KDO-8-phosphate synthase</fullName>
        <shortName evidence="1">KDO 8-P synthase</shortName>
        <shortName evidence="1">KDOPS</shortName>
    </alternativeName>
    <alternativeName>
        <fullName evidence="1">Phospho-2-dehydro-3-deoxyoctonate aldolase</fullName>
    </alternativeName>
</protein>
<dbReference type="EC" id="2.5.1.55" evidence="1"/>
<dbReference type="EMBL" id="CP000733">
    <property type="protein sequence ID" value="ABS76718.2"/>
    <property type="molecule type" value="Genomic_DNA"/>
</dbReference>
<dbReference type="RefSeq" id="WP_011996522.1">
    <property type="nucleotide sequence ID" value="NC_009727.1"/>
</dbReference>
<dbReference type="SMR" id="A9KDH6"/>
<dbReference type="KEGG" id="cbd:CBUD_0326"/>
<dbReference type="HOGENOM" id="CLU_036666_0_0_6"/>
<dbReference type="UniPathway" id="UPA00030"/>
<dbReference type="UniPathway" id="UPA00357">
    <property type="reaction ID" value="UER00474"/>
</dbReference>
<dbReference type="Proteomes" id="UP000008555">
    <property type="component" value="Chromosome"/>
</dbReference>
<dbReference type="GO" id="GO:0005737">
    <property type="term" value="C:cytoplasm"/>
    <property type="evidence" value="ECO:0007669"/>
    <property type="project" value="UniProtKB-SubCell"/>
</dbReference>
<dbReference type="GO" id="GO:0008676">
    <property type="term" value="F:3-deoxy-8-phosphooctulonate synthase activity"/>
    <property type="evidence" value="ECO:0007669"/>
    <property type="project" value="UniProtKB-UniRule"/>
</dbReference>
<dbReference type="GO" id="GO:0019294">
    <property type="term" value="P:keto-3-deoxy-D-manno-octulosonic acid biosynthetic process"/>
    <property type="evidence" value="ECO:0007669"/>
    <property type="project" value="UniProtKB-UniRule"/>
</dbReference>
<dbReference type="Gene3D" id="3.20.20.70">
    <property type="entry name" value="Aldolase class I"/>
    <property type="match status" value="1"/>
</dbReference>
<dbReference type="HAMAP" id="MF_00056">
    <property type="entry name" value="KDO8P_synth"/>
    <property type="match status" value="1"/>
</dbReference>
<dbReference type="InterPro" id="IPR013785">
    <property type="entry name" value="Aldolase_TIM"/>
</dbReference>
<dbReference type="InterPro" id="IPR006218">
    <property type="entry name" value="DAHP1/KDSA"/>
</dbReference>
<dbReference type="InterPro" id="IPR006269">
    <property type="entry name" value="KDO8P_synthase"/>
</dbReference>
<dbReference type="NCBIfam" id="TIGR01362">
    <property type="entry name" value="KDO8P_synth"/>
    <property type="match status" value="1"/>
</dbReference>
<dbReference type="NCBIfam" id="NF003543">
    <property type="entry name" value="PRK05198.1"/>
    <property type="match status" value="1"/>
</dbReference>
<dbReference type="PANTHER" id="PTHR21057">
    <property type="entry name" value="PHOSPHO-2-DEHYDRO-3-DEOXYHEPTONATE ALDOLASE"/>
    <property type="match status" value="1"/>
</dbReference>
<dbReference type="Pfam" id="PF00793">
    <property type="entry name" value="DAHP_synth_1"/>
    <property type="match status" value="1"/>
</dbReference>
<dbReference type="SUPFAM" id="SSF51569">
    <property type="entry name" value="Aldolase"/>
    <property type="match status" value="1"/>
</dbReference>
<comment type="catalytic activity">
    <reaction evidence="1">
        <text>D-arabinose 5-phosphate + phosphoenolpyruvate + H2O = 3-deoxy-alpha-D-manno-2-octulosonate-8-phosphate + phosphate</text>
        <dbReference type="Rhea" id="RHEA:14053"/>
        <dbReference type="ChEBI" id="CHEBI:15377"/>
        <dbReference type="ChEBI" id="CHEBI:43474"/>
        <dbReference type="ChEBI" id="CHEBI:57693"/>
        <dbReference type="ChEBI" id="CHEBI:58702"/>
        <dbReference type="ChEBI" id="CHEBI:85985"/>
        <dbReference type="EC" id="2.5.1.55"/>
    </reaction>
</comment>
<comment type="pathway">
    <text evidence="1">Carbohydrate biosynthesis; 3-deoxy-D-manno-octulosonate biosynthesis; 3-deoxy-D-manno-octulosonate from D-ribulose 5-phosphate: step 2/3.</text>
</comment>
<comment type="pathway">
    <text evidence="1">Bacterial outer membrane biogenesis; lipopolysaccharide biosynthesis.</text>
</comment>
<comment type="subcellular location">
    <subcellularLocation>
        <location evidence="1">Cytoplasm</location>
    </subcellularLocation>
</comment>
<comment type="similarity">
    <text evidence="1">Belongs to the KdsA family.</text>
</comment>
<accession>A9KDH6</accession>
<proteinExistence type="inferred from homology"/>
<evidence type="ECO:0000255" key="1">
    <source>
        <dbReference type="HAMAP-Rule" id="MF_00056"/>
    </source>
</evidence>